<accession>Q8L770</accession>
<accession>O04018</accession>
<accession>Q67XY5</accession>
<accession>Q680D2</accession>
<name>CLPR3_ARATH</name>
<gene>
    <name evidence="8" type="primary">CLPR3</name>
    <name type="synonym">NCLPP8</name>
    <name evidence="11" type="ordered locus">At1g09130</name>
    <name evidence="12" type="ORF">F7G19.1</name>
</gene>
<keyword id="KW-0025">Alternative splicing</keyword>
<keyword id="KW-0150">Chloroplast</keyword>
<keyword id="KW-0903">Direct protein sequencing</keyword>
<keyword id="KW-0934">Plastid</keyword>
<keyword id="KW-1185">Reference proteome</keyword>
<keyword id="KW-0809">Transit peptide</keyword>
<reference key="1">
    <citation type="journal article" date="2000" name="Nature">
        <title>Sequence and analysis of chromosome 1 of the plant Arabidopsis thaliana.</title>
        <authorList>
            <person name="Theologis A."/>
            <person name="Ecker J.R."/>
            <person name="Palm C.J."/>
            <person name="Federspiel N.A."/>
            <person name="Kaul S."/>
            <person name="White O."/>
            <person name="Alonso J."/>
            <person name="Altafi H."/>
            <person name="Araujo R."/>
            <person name="Bowman C.L."/>
            <person name="Brooks S.Y."/>
            <person name="Buehler E."/>
            <person name="Chan A."/>
            <person name="Chao Q."/>
            <person name="Chen H."/>
            <person name="Cheuk R.F."/>
            <person name="Chin C.W."/>
            <person name="Chung M.K."/>
            <person name="Conn L."/>
            <person name="Conway A.B."/>
            <person name="Conway A.R."/>
            <person name="Creasy T.H."/>
            <person name="Dewar K."/>
            <person name="Dunn P."/>
            <person name="Etgu P."/>
            <person name="Feldblyum T.V."/>
            <person name="Feng J.-D."/>
            <person name="Fong B."/>
            <person name="Fujii C.Y."/>
            <person name="Gill J.E."/>
            <person name="Goldsmith A.D."/>
            <person name="Haas B."/>
            <person name="Hansen N.F."/>
            <person name="Hughes B."/>
            <person name="Huizar L."/>
            <person name="Hunter J.L."/>
            <person name="Jenkins J."/>
            <person name="Johnson-Hopson C."/>
            <person name="Khan S."/>
            <person name="Khaykin E."/>
            <person name="Kim C.J."/>
            <person name="Koo H.L."/>
            <person name="Kremenetskaia I."/>
            <person name="Kurtz D.B."/>
            <person name="Kwan A."/>
            <person name="Lam B."/>
            <person name="Langin-Hooper S."/>
            <person name="Lee A."/>
            <person name="Lee J.M."/>
            <person name="Lenz C.A."/>
            <person name="Li J.H."/>
            <person name="Li Y.-P."/>
            <person name="Lin X."/>
            <person name="Liu S.X."/>
            <person name="Liu Z.A."/>
            <person name="Luros J.S."/>
            <person name="Maiti R."/>
            <person name="Marziali A."/>
            <person name="Militscher J."/>
            <person name="Miranda M."/>
            <person name="Nguyen M."/>
            <person name="Nierman W.C."/>
            <person name="Osborne B.I."/>
            <person name="Pai G."/>
            <person name="Peterson J."/>
            <person name="Pham P.K."/>
            <person name="Rizzo M."/>
            <person name="Rooney T."/>
            <person name="Rowley D."/>
            <person name="Sakano H."/>
            <person name="Salzberg S.L."/>
            <person name="Schwartz J.R."/>
            <person name="Shinn P."/>
            <person name="Southwick A.M."/>
            <person name="Sun H."/>
            <person name="Tallon L.J."/>
            <person name="Tambunga G."/>
            <person name="Toriumi M.J."/>
            <person name="Town C.D."/>
            <person name="Utterback T."/>
            <person name="Van Aken S."/>
            <person name="Vaysberg M."/>
            <person name="Vysotskaia V.S."/>
            <person name="Walker M."/>
            <person name="Wu D."/>
            <person name="Yu G."/>
            <person name="Fraser C.M."/>
            <person name="Venter J.C."/>
            <person name="Davis R.W."/>
        </authorList>
    </citation>
    <scope>NUCLEOTIDE SEQUENCE [LARGE SCALE GENOMIC DNA]</scope>
    <source>
        <strain>cv. Columbia</strain>
    </source>
</reference>
<reference key="2">
    <citation type="journal article" date="2017" name="Plant J.">
        <title>Araport11: a complete reannotation of the Arabidopsis thaliana reference genome.</title>
        <authorList>
            <person name="Cheng C.Y."/>
            <person name="Krishnakumar V."/>
            <person name="Chan A.P."/>
            <person name="Thibaud-Nissen F."/>
            <person name="Schobel S."/>
            <person name="Town C.D."/>
        </authorList>
    </citation>
    <scope>GENOME REANNOTATION</scope>
    <source>
        <strain>cv. Columbia</strain>
    </source>
</reference>
<reference key="3">
    <citation type="journal article" date="2003" name="Science">
        <title>Empirical analysis of transcriptional activity in the Arabidopsis genome.</title>
        <authorList>
            <person name="Yamada K."/>
            <person name="Lim J."/>
            <person name="Dale J.M."/>
            <person name="Chen H."/>
            <person name="Shinn P."/>
            <person name="Palm C.J."/>
            <person name="Southwick A.M."/>
            <person name="Wu H.C."/>
            <person name="Kim C.J."/>
            <person name="Nguyen M."/>
            <person name="Pham P.K."/>
            <person name="Cheuk R.F."/>
            <person name="Karlin-Newmann G."/>
            <person name="Liu S.X."/>
            <person name="Lam B."/>
            <person name="Sakano H."/>
            <person name="Wu T."/>
            <person name="Yu G."/>
            <person name="Miranda M."/>
            <person name="Quach H.L."/>
            <person name="Tripp M."/>
            <person name="Chang C.H."/>
            <person name="Lee J.M."/>
            <person name="Toriumi M.J."/>
            <person name="Chan M.M."/>
            <person name="Tang C.C."/>
            <person name="Onodera C.S."/>
            <person name="Deng J.M."/>
            <person name="Akiyama K."/>
            <person name="Ansari Y."/>
            <person name="Arakawa T."/>
            <person name="Banh J."/>
            <person name="Banno F."/>
            <person name="Bowser L."/>
            <person name="Brooks S.Y."/>
            <person name="Carninci P."/>
            <person name="Chao Q."/>
            <person name="Choy N."/>
            <person name="Enju A."/>
            <person name="Goldsmith A.D."/>
            <person name="Gurjal M."/>
            <person name="Hansen N.F."/>
            <person name="Hayashizaki Y."/>
            <person name="Johnson-Hopson C."/>
            <person name="Hsuan V.W."/>
            <person name="Iida K."/>
            <person name="Karnes M."/>
            <person name="Khan S."/>
            <person name="Koesema E."/>
            <person name="Ishida J."/>
            <person name="Jiang P.X."/>
            <person name="Jones T."/>
            <person name="Kawai J."/>
            <person name="Kamiya A."/>
            <person name="Meyers C."/>
            <person name="Nakajima M."/>
            <person name="Narusaka M."/>
            <person name="Seki M."/>
            <person name="Sakurai T."/>
            <person name="Satou M."/>
            <person name="Tamse R."/>
            <person name="Vaysberg M."/>
            <person name="Wallender E.K."/>
            <person name="Wong C."/>
            <person name="Yamamura Y."/>
            <person name="Yuan S."/>
            <person name="Shinozaki K."/>
            <person name="Davis R.W."/>
            <person name="Theologis A."/>
            <person name="Ecker J.R."/>
        </authorList>
    </citation>
    <scope>NUCLEOTIDE SEQUENCE [LARGE SCALE MRNA]</scope>
    <source>
        <strain>cv. Columbia</strain>
    </source>
</reference>
<reference key="4">
    <citation type="submission" date="2006-07" db="EMBL/GenBank/DDBJ databases">
        <title>Large-scale analysis of RIKEN Arabidopsis full-length (RAFL) cDNAs.</title>
        <authorList>
            <person name="Totoki Y."/>
            <person name="Seki M."/>
            <person name="Ishida J."/>
            <person name="Nakajima M."/>
            <person name="Enju A."/>
            <person name="Kamiya A."/>
            <person name="Narusaka M."/>
            <person name="Shin-i T."/>
            <person name="Nakagawa M."/>
            <person name="Sakamoto N."/>
            <person name="Oishi K."/>
            <person name="Kohara Y."/>
            <person name="Kobayashi M."/>
            <person name="Toyoda A."/>
            <person name="Sakaki Y."/>
            <person name="Sakurai T."/>
            <person name="Iida K."/>
            <person name="Akiyama K."/>
            <person name="Satou M."/>
            <person name="Toyoda T."/>
            <person name="Konagaya A."/>
            <person name="Carninci P."/>
            <person name="Kawai J."/>
            <person name="Hayashizaki Y."/>
            <person name="Shinozaki K."/>
        </authorList>
    </citation>
    <scope>NUCLEOTIDE SEQUENCE [LARGE SCALE MRNA]</scope>
    <source>
        <strain>cv. Columbia</strain>
    </source>
</reference>
<reference key="5">
    <citation type="journal article" date="2001" name="J. Biol. Chem.">
        <title>Identification of a 350-kDa ClpP protease complex with 10 different Clp isoforms in chloroplasts of Arabidopsis thaliana.</title>
        <authorList>
            <person name="Peltier J.-B."/>
            <person name="Ytterberg J."/>
            <person name="Liberles D.A."/>
            <person name="Roepstorff P."/>
            <person name="van Wijk K.J."/>
        </authorList>
    </citation>
    <scope>PROTEIN SEQUENCE OF 174-196 AND 238-252</scope>
    <scope>SUBUNIT</scope>
    <scope>IDENTIFICATION BY MASS SPECTROMETRY</scope>
</reference>
<reference key="6">
    <citation type="journal article" date="2001" name="Plant Physiol.">
        <title>Chloroplast and mitochondrial proteases in Arabidopsis. A proposed nomenclature.</title>
        <authorList>
            <person name="Adam Z."/>
            <person name="Adamska I."/>
            <person name="Nakabayashi K."/>
            <person name="Ostersetzer O."/>
            <person name="Haussuhl K."/>
            <person name="Manuell A."/>
            <person name="Zheng B."/>
            <person name="Vallon O."/>
            <person name="Rodermel S.R."/>
            <person name="Shinozaki K."/>
            <person name="Clarke A.K."/>
        </authorList>
    </citation>
    <scope>GENE FAMILY</scope>
    <scope>NOMENCLATURE</scope>
</reference>
<reference key="7">
    <citation type="journal article" date="2004" name="J. Biol. Chem.">
        <title>Clp protease complexes from photosynthetic and non-photosynthetic plastids and mitochondria of plants, their predicted three-dimensional structures, and functional implications.</title>
        <authorList>
            <person name="Peltier J.-B."/>
            <person name="Ripoll D.R."/>
            <person name="Friso G."/>
            <person name="Rudella A."/>
            <person name="Cai Y."/>
            <person name="Ytterberg J."/>
            <person name="Giacomelli L."/>
            <person name="Pillardy J."/>
            <person name="van Wijk K.J."/>
        </authorList>
    </citation>
    <scope>IDENTIFICATION BY MASS SPECTROMETRY</scope>
    <scope>SUBUNIT</scope>
    <scope>SUBCELLULAR LOCATION</scope>
    <scope>3D-STRUCTURE MODELING</scope>
</reference>
<reference key="8">
    <citation type="journal article" date="2005" name="Physiol. Plantarum">
        <title>The ATP-dependent Clp protease in chloroplasts of higher plants.</title>
        <authorList>
            <person name="Clarke A.K."/>
            <person name="MacDonald T.M."/>
            <person name="Sjoegren L.L."/>
        </authorList>
    </citation>
    <scope>NOMENCLATURE</scope>
    <scope>DISRUPTION PHENOTYPE</scope>
</reference>
<reference key="9">
    <citation type="journal article" date="2006" name="Plant Cell">
        <title>Downregulation of ClpR2 leads to reduced accumulation of the ClpPRS protease complex and defects in chloroplast biogenesis in Arabidopsis.</title>
        <authorList>
            <person name="Rudella A."/>
            <person name="Friso G."/>
            <person name="Alonso J.M."/>
            <person name="Ecker J.R."/>
            <person name="van Wijk K.J."/>
        </authorList>
    </citation>
    <scope>IDENTIFICATION BY MASS SPECTROMETRY</scope>
    <scope>SUBUNIT</scope>
</reference>
<reference key="10">
    <citation type="journal article" date="2006" name="Plant Cell">
        <title>Structural and functional insights into the chloroplast ATP-dependent Clp protease in Arabidopsis.</title>
        <authorList>
            <person name="Sjoegren L.L.E."/>
            <person name="Stanne T.M."/>
            <person name="Zheng B."/>
            <person name="Sutinen S."/>
            <person name="Clarke A.K."/>
        </authorList>
    </citation>
    <scope>SUBUNIT</scope>
</reference>
<reference key="11">
    <citation type="journal article" date="2011" name="Plant Cell">
        <title>Subunit stoichiometry, evolution, and functional implications of an asymmetric plant plastid ClpP/R protease complex in Arabidopsis.</title>
        <authorList>
            <person name="Olinares P.D."/>
            <person name="Kim J."/>
            <person name="Davis J.I."/>
            <person name="van Wijk K.J."/>
        </authorList>
    </citation>
    <scope>IDENTIFICATION BY MASS SPECTROMETRY</scope>
    <scope>SUBUNIT</scope>
</reference>
<reference key="12">
    <citation type="journal article" date="2012" name="Physiol. Plantarum">
        <title>The chloroplast ATP-dependent Clp protease in vascular plants - new dimensions and future challenges.</title>
        <authorList>
            <person name="Clarke A.K."/>
        </authorList>
    </citation>
    <scope>REVIEW</scope>
</reference>
<dbReference type="EMBL" id="AC000106">
    <property type="protein sequence ID" value="AAB70396.1"/>
    <property type="status" value="ALT_SEQ"/>
    <property type="molecule type" value="Genomic_DNA"/>
</dbReference>
<dbReference type="EMBL" id="CP002684">
    <property type="protein sequence ID" value="AEE28397.1"/>
    <property type="molecule type" value="Genomic_DNA"/>
</dbReference>
<dbReference type="EMBL" id="CP002684">
    <property type="protein sequence ID" value="AEE28398.1"/>
    <property type="molecule type" value="Genomic_DNA"/>
</dbReference>
<dbReference type="EMBL" id="AY136442">
    <property type="protein sequence ID" value="AAM97107.1"/>
    <property type="molecule type" value="mRNA"/>
</dbReference>
<dbReference type="EMBL" id="BT002132">
    <property type="protein sequence ID" value="AAN72143.1"/>
    <property type="molecule type" value="mRNA"/>
</dbReference>
<dbReference type="EMBL" id="AK175123">
    <property type="protein sequence ID" value="BAD42886.1"/>
    <property type="molecule type" value="mRNA"/>
</dbReference>
<dbReference type="EMBL" id="AK175317">
    <property type="protein sequence ID" value="BAD43080.1"/>
    <property type="molecule type" value="mRNA"/>
</dbReference>
<dbReference type="EMBL" id="AK175337">
    <property type="protein sequence ID" value="BAD43100.1"/>
    <property type="molecule type" value="mRNA"/>
</dbReference>
<dbReference type="EMBL" id="AK175767">
    <property type="protein sequence ID" value="BAD43530.1"/>
    <property type="molecule type" value="mRNA"/>
</dbReference>
<dbReference type="EMBL" id="AK175857">
    <property type="protein sequence ID" value="BAD43620.1"/>
    <property type="molecule type" value="mRNA"/>
</dbReference>
<dbReference type="EMBL" id="AK175858">
    <property type="protein sequence ID" value="BAD43621.1"/>
    <property type="molecule type" value="mRNA"/>
</dbReference>
<dbReference type="EMBL" id="AK175935">
    <property type="protein sequence ID" value="BAD43698.1"/>
    <property type="molecule type" value="mRNA"/>
</dbReference>
<dbReference type="EMBL" id="AK176445">
    <property type="protein sequence ID" value="BAD44208.1"/>
    <property type="molecule type" value="mRNA"/>
</dbReference>
<dbReference type="EMBL" id="AK176591">
    <property type="protein sequence ID" value="BAD44354.1"/>
    <property type="molecule type" value="mRNA"/>
</dbReference>
<dbReference type="EMBL" id="AK176592">
    <property type="protein sequence ID" value="BAD44355.1"/>
    <property type="molecule type" value="mRNA"/>
</dbReference>
<dbReference type="EMBL" id="AK176683">
    <property type="protein sequence ID" value="BAD44446.1"/>
    <property type="molecule type" value="mRNA"/>
</dbReference>
<dbReference type="EMBL" id="AK176714">
    <property type="protein sequence ID" value="BAD44477.1"/>
    <property type="molecule type" value="mRNA"/>
</dbReference>
<dbReference type="EMBL" id="AK176771">
    <property type="protein sequence ID" value="BAD44534.1"/>
    <property type="molecule type" value="mRNA"/>
</dbReference>
<dbReference type="EMBL" id="AK227271">
    <property type="protein sequence ID" value="BAE99296.1"/>
    <property type="molecule type" value="mRNA"/>
</dbReference>
<dbReference type="PIR" id="D86223">
    <property type="entry name" value="D86223"/>
</dbReference>
<dbReference type="RefSeq" id="NP_001031008.1">
    <molecule id="Q8L770-1"/>
    <property type="nucleotide sequence ID" value="NM_001035931.2"/>
</dbReference>
<dbReference type="RefSeq" id="NP_563836.1">
    <molecule id="Q8L770-1"/>
    <property type="nucleotide sequence ID" value="NM_100782.5"/>
</dbReference>
<dbReference type="SMR" id="Q8L770"/>
<dbReference type="BioGRID" id="22673">
    <property type="interactions" value="10"/>
</dbReference>
<dbReference type="FunCoup" id="Q8L770">
    <property type="interactions" value="1104"/>
</dbReference>
<dbReference type="IntAct" id="Q8L770">
    <property type="interactions" value="1"/>
</dbReference>
<dbReference type="STRING" id="3702.Q8L770"/>
<dbReference type="iPTMnet" id="Q8L770"/>
<dbReference type="PaxDb" id="3702-AT1G09130.3"/>
<dbReference type="EnsemblPlants" id="AT1G09130.1">
    <molecule id="Q8L770-1"/>
    <property type="protein sequence ID" value="AT1G09130.1"/>
    <property type="gene ID" value="AT1G09130"/>
</dbReference>
<dbReference type="EnsemblPlants" id="AT1G09130.2">
    <molecule id="Q8L770-1"/>
    <property type="protein sequence ID" value="AT1G09130.2"/>
    <property type="gene ID" value="AT1G09130"/>
</dbReference>
<dbReference type="GeneID" id="837432"/>
<dbReference type="Gramene" id="AT1G09130.1">
    <molecule id="Q8L770-1"/>
    <property type="protein sequence ID" value="AT1G09130.1"/>
    <property type="gene ID" value="AT1G09130"/>
</dbReference>
<dbReference type="Gramene" id="AT1G09130.2">
    <molecule id="Q8L770-1"/>
    <property type="protein sequence ID" value="AT1G09130.2"/>
    <property type="gene ID" value="AT1G09130"/>
</dbReference>
<dbReference type="KEGG" id="ath:AT1G09130"/>
<dbReference type="Araport" id="AT1G09130"/>
<dbReference type="TAIR" id="AT1G09130"/>
<dbReference type="eggNOG" id="KOG0840">
    <property type="taxonomic scope" value="Eukaryota"/>
</dbReference>
<dbReference type="HOGENOM" id="CLU_058707_5_0_1"/>
<dbReference type="InParanoid" id="Q8L770"/>
<dbReference type="OMA" id="EFLYLQW"/>
<dbReference type="PhylomeDB" id="Q8L770"/>
<dbReference type="PRO" id="PR:Q8L770"/>
<dbReference type="Proteomes" id="UP000006548">
    <property type="component" value="Chromosome 1"/>
</dbReference>
<dbReference type="ExpressionAtlas" id="Q8L770">
    <property type="expression patterns" value="baseline and differential"/>
</dbReference>
<dbReference type="GO" id="GO:0009507">
    <property type="term" value="C:chloroplast"/>
    <property type="evidence" value="ECO:0007669"/>
    <property type="project" value="UniProtKB-SubCell"/>
</dbReference>
<dbReference type="GO" id="GO:0009532">
    <property type="term" value="C:plastid stroma"/>
    <property type="evidence" value="ECO:0007669"/>
    <property type="project" value="UniProtKB-ARBA"/>
</dbReference>
<dbReference type="GO" id="GO:0004176">
    <property type="term" value="F:ATP-dependent peptidase activity"/>
    <property type="evidence" value="ECO:0007669"/>
    <property type="project" value="InterPro"/>
</dbReference>
<dbReference type="GO" id="GO:0004252">
    <property type="term" value="F:serine-type endopeptidase activity"/>
    <property type="evidence" value="ECO:0007669"/>
    <property type="project" value="InterPro"/>
</dbReference>
<dbReference type="GO" id="GO:0006508">
    <property type="term" value="P:proteolysis"/>
    <property type="evidence" value="ECO:0007669"/>
    <property type="project" value="InterPro"/>
</dbReference>
<dbReference type="CDD" id="cd07017">
    <property type="entry name" value="S14_ClpP_2"/>
    <property type="match status" value="1"/>
</dbReference>
<dbReference type="FunFam" id="3.90.226.10:FF:000020">
    <property type="entry name" value="ATP-dependent Clp protease proteolytic subunit"/>
    <property type="match status" value="1"/>
</dbReference>
<dbReference type="Gene3D" id="3.90.226.10">
    <property type="entry name" value="2-enoyl-CoA Hydratase, Chain A, domain 1"/>
    <property type="match status" value="1"/>
</dbReference>
<dbReference type="InterPro" id="IPR001907">
    <property type="entry name" value="ClpP"/>
</dbReference>
<dbReference type="InterPro" id="IPR029045">
    <property type="entry name" value="ClpP/crotonase-like_dom_sf"/>
</dbReference>
<dbReference type="InterPro" id="IPR023562">
    <property type="entry name" value="ClpP/TepA"/>
</dbReference>
<dbReference type="PANTHER" id="PTHR10381">
    <property type="entry name" value="ATP-DEPENDENT CLP PROTEASE PROTEOLYTIC SUBUNIT"/>
    <property type="match status" value="1"/>
</dbReference>
<dbReference type="PANTHER" id="PTHR10381:SF6">
    <property type="entry name" value="ATP-DEPENDENT CLP PROTEASE PROTEOLYTIC SUBUNIT-RELATED PROTEIN 3, CHLOROPLASTIC"/>
    <property type="match status" value="1"/>
</dbReference>
<dbReference type="Pfam" id="PF00574">
    <property type="entry name" value="CLP_protease"/>
    <property type="match status" value="1"/>
</dbReference>
<dbReference type="PRINTS" id="PR00127">
    <property type="entry name" value="CLPPROTEASEP"/>
</dbReference>
<dbReference type="SUPFAM" id="SSF52096">
    <property type="entry name" value="ClpP/crotonase"/>
    <property type="match status" value="1"/>
</dbReference>
<protein>
    <recommendedName>
        <fullName evidence="8">ATP-dependent Clp protease proteolytic subunit-related protein 3, chloroplastic</fullName>
        <shortName evidence="8">ClpR3</shortName>
    </recommendedName>
    <alternativeName>
        <fullName>nClpP8</fullName>
    </alternativeName>
</protein>
<evidence type="ECO:0000255" key="1"/>
<evidence type="ECO:0000256" key="2">
    <source>
        <dbReference type="SAM" id="MobiDB-lite"/>
    </source>
</evidence>
<evidence type="ECO:0000269" key="3">
    <source>
    </source>
</evidence>
<evidence type="ECO:0000269" key="4">
    <source>
    </source>
</evidence>
<evidence type="ECO:0000269" key="5">
    <source>
    </source>
</evidence>
<evidence type="ECO:0000269" key="6">
    <source>
    </source>
</evidence>
<evidence type="ECO:0000269" key="7">
    <source>
    </source>
</evidence>
<evidence type="ECO:0000303" key="8">
    <source>
    </source>
</evidence>
<evidence type="ECO:0000303" key="9">
    <source ref="8"/>
</evidence>
<evidence type="ECO:0000305" key="10"/>
<evidence type="ECO:0000312" key="11">
    <source>
        <dbReference type="Araport" id="AT1G09130"/>
    </source>
</evidence>
<evidence type="ECO:0000312" key="12">
    <source>
        <dbReference type="EMBL" id="AAB70396.1"/>
    </source>
</evidence>
<feature type="transit peptide" description="Chloroplast" evidence="1">
    <location>
        <begin position="1"/>
        <end position="43"/>
    </location>
</feature>
<feature type="chain" id="PRO_0000308984" description="ATP-dependent Clp protease proteolytic subunit-related protein 3, chloroplastic">
    <location>
        <begin position="44"/>
        <end position="330"/>
    </location>
</feature>
<feature type="region of interest" description="Disordered" evidence="2">
    <location>
        <begin position="7"/>
        <end position="32"/>
    </location>
</feature>
<feature type="compositionally biased region" description="Low complexity" evidence="2">
    <location>
        <begin position="8"/>
        <end position="30"/>
    </location>
</feature>
<feature type="sequence conflict" description="In Ref. 4; BAD44446." evidence="10" ref="4">
    <original>Q</original>
    <variation>R</variation>
    <location>
        <position position="235"/>
    </location>
</feature>
<sequence length="330" mass="36307">MASCLQASMNSLLPRSSSFSPHPPLSSNSSGRRNLKTFRYAFRAKASAKIPMPPINPKDPFLSTLASIAANSPEKLLNRPVNADVPPYLDIFDSPQLMSSPAQVERSVAYNEHRPRTPPPDLPSMLLDGRIVYIGMPLVPAVTELVVAELMYLQWLDPKEPIYIYINSTGTTRDDGETVGMESEGFAIYDSLMQLKNEVHTVCVGAAIGQACLLLSAGTKGKRFMMPHAKAMIQQPRVPSSGLMPASDVLIRAKEVITNRDILVELLSKHTGNSVETVANVMRRPYYMDAPKAKEFGVIDRILWRGQEKIIADVVPSEEFDKNAGIKSVV</sequence>
<proteinExistence type="evidence at protein level"/>
<organism>
    <name type="scientific">Arabidopsis thaliana</name>
    <name type="common">Mouse-ear cress</name>
    <dbReference type="NCBI Taxonomy" id="3702"/>
    <lineage>
        <taxon>Eukaryota</taxon>
        <taxon>Viridiplantae</taxon>
        <taxon>Streptophyta</taxon>
        <taxon>Embryophyta</taxon>
        <taxon>Tracheophyta</taxon>
        <taxon>Spermatophyta</taxon>
        <taxon>Magnoliopsida</taxon>
        <taxon>eudicotyledons</taxon>
        <taxon>Gunneridae</taxon>
        <taxon>Pentapetalae</taxon>
        <taxon>rosids</taxon>
        <taxon>malvids</taxon>
        <taxon>Brassicales</taxon>
        <taxon>Brassicaceae</taxon>
        <taxon>Camelineae</taxon>
        <taxon>Arabidopsis</taxon>
    </lineage>
</organism>
<comment type="subunit">
    <text evidence="3 4 5 6 7">Component of the chloroplastic Clp protease core complex which consist of at least 16 proteins: CLPP4 (3 copies), CLPP5 (3 copies), CLPR4 (2 copies), ClpP1 (1 copy), CLPP6 (1 copy), CLPR2 (1 copy), CLPT1 (1 copy), CLPT2 (1 copy) and 3 copies of CLPP3 and/or CLPR1 and/or CLPR3 (PubMed:11278690, PubMed:14593120, PubMed:16766689, PubMed:16980539). The core complex is organized in two heptameric rings, one containing CLPP3,4,5,6 in a 1:2:3:1 ratio and the other CLPP1 and CLPR1,2,3,4 in a 3:1:1:1:1 ratio (PubMed:21712416).</text>
</comment>
<comment type="subcellular location">
    <subcellularLocation>
        <location evidence="4">Plastid</location>
        <location evidence="4">Chloroplast</location>
    </subcellularLocation>
</comment>
<comment type="alternative products">
    <event type="alternative splicing"/>
    <isoform>
        <id>Q8L770-1</id>
        <name>1</name>
        <sequence type="displayed"/>
    </isoform>
    <text>A number of isoforms are produced. According to EST sequences.</text>
</comment>
<comment type="disruption phenotype">
    <text evidence="9">Embryo lethal.</text>
</comment>
<comment type="similarity">
    <text evidence="10">Belongs to the peptidase S14 family.</text>
</comment>
<comment type="sequence caution" evidence="10">
    <conflict type="erroneous gene model prediction">
        <sequence resource="EMBL-CDS" id="AAB70396"/>
    </conflict>
</comment>